<proteinExistence type="evidence at protein level"/>
<dbReference type="EMBL" id="CU329670">
    <property type="protein sequence ID" value="CAB61462.1"/>
    <property type="molecule type" value="Genomic_DNA"/>
</dbReference>
<dbReference type="PIR" id="T50169">
    <property type="entry name" value="T50169"/>
</dbReference>
<dbReference type="RefSeq" id="NP_592967.1">
    <property type="nucleotide sequence ID" value="NM_001018367.2"/>
</dbReference>
<dbReference type="SMR" id="Q9UTC6"/>
<dbReference type="BioGRID" id="278014">
    <property type="interactions" value="14"/>
</dbReference>
<dbReference type="FunCoup" id="Q9UTC6">
    <property type="interactions" value="230"/>
</dbReference>
<dbReference type="IntAct" id="Q9UTC6">
    <property type="interactions" value="4"/>
</dbReference>
<dbReference type="STRING" id="284812.Q9UTC6"/>
<dbReference type="iPTMnet" id="Q9UTC6"/>
<dbReference type="PaxDb" id="4896-SPAC227.13c.1"/>
<dbReference type="EnsemblFungi" id="SPAC227.13c.1">
    <property type="protein sequence ID" value="SPAC227.13c.1:pep"/>
    <property type="gene ID" value="SPAC227.13c"/>
</dbReference>
<dbReference type="GeneID" id="2541513"/>
<dbReference type="KEGG" id="spo:2541513"/>
<dbReference type="PomBase" id="SPAC227.13c">
    <property type="gene designation" value="isu1"/>
</dbReference>
<dbReference type="VEuPathDB" id="FungiDB:SPAC227.13c"/>
<dbReference type="eggNOG" id="KOG3361">
    <property type="taxonomic scope" value="Eukaryota"/>
</dbReference>
<dbReference type="HOGENOM" id="CLU_079283_1_2_1"/>
<dbReference type="InParanoid" id="Q9UTC6"/>
<dbReference type="OMA" id="SMVTEMV"/>
<dbReference type="PhylomeDB" id="Q9UTC6"/>
<dbReference type="Reactome" id="R-SPO-1362409">
    <property type="pathway name" value="Mitochondrial iron-sulfur cluster biogenesis"/>
</dbReference>
<dbReference type="Reactome" id="R-SPO-9865881">
    <property type="pathway name" value="Complex III assembly"/>
</dbReference>
<dbReference type="UniPathway" id="UPA00266"/>
<dbReference type="PRO" id="PR:Q9UTC6"/>
<dbReference type="Proteomes" id="UP000002485">
    <property type="component" value="Chromosome I"/>
</dbReference>
<dbReference type="GO" id="GO:0005737">
    <property type="term" value="C:cytoplasm"/>
    <property type="evidence" value="ECO:0000318"/>
    <property type="project" value="GO_Central"/>
</dbReference>
<dbReference type="GO" id="GO:0099128">
    <property type="term" value="C:mitochondrial [2Fe-2S] assembly complex"/>
    <property type="evidence" value="ECO:0000304"/>
    <property type="project" value="PomBase"/>
</dbReference>
<dbReference type="GO" id="GO:0005759">
    <property type="term" value="C:mitochondrial matrix"/>
    <property type="evidence" value="ECO:0000318"/>
    <property type="project" value="GO_Central"/>
</dbReference>
<dbReference type="GO" id="GO:0005739">
    <property type="term" value="C:mitochondrion"/>
    <property type="evidence" value="ECO:0007005"/>
    <property type="project" value="PomBase"/>
</dbReference>
<dbReference type="GO" id="GO:0051537">
    <property type="term" value="F:2 iron, 2 sulfur cluster binding"/>
    <property type="evidence" value="ECO:0000314"/>
    <property type="project" value="PomBase"/>
</dbReference>
<dbReference type="GO" id="GO:0008198">
    <property type="term" value="F:ferrous iron binding"/>
    <property type="evidence" value="ECO:0000318"/>
    <property type="project" value="GO_Central"/>
</dbReference>
<dbReference type="GO" id="GO:0051536">
    <property type="term" value="F:iron-sulfur cluster binding"/>
    <property type="evidence" value="ECO:0000314"/>
    <property type="project" value="PomBase"/>
</dbReference>
<dbReference type="GO" id="GO:0140132">
    <property type="term" value="F:iron-sulfur cluster chaperone activity"/>
    <property type="evidence" value="ECO:0000314"/>
    <property type="project" value="PomBase"/>
</dbReference>
<dbReference type="GO" id="GO:0044571">
    <property type="term" value="P:[2Fe-2S] cluster assembly"/>
    <property type="evidence" value="ECO:0000314"/>
    <property type="project" value="PomBase"/>
</dbReference>
<dbReference type="GO" id="GO:0006879">
    <property type="term" value="P:intracellular iron ion homeostasis"/>
    <property type="evidence" value="ECO:0000318"/>
    <property type="project" value="GO_Central"/>
</dbReference>
<dbReference type="GO" id="GO:0016226">
    <property type="term" value="P:iron-sulfur cluster assembly"/>
    <property type="evidence" value="ECO:0000315"/>
    <property type="project" value="PomBase"/>
</dbReference>
<dbReference type="CDD" id="cd06664">
    <property type="entry name" value="IscU_like"/>
    <property type="match status" value="1"/>
</dbReference>
<dbReference type="FunFam" id="3.90.1010.10:FF:000005">
    <property type="entry name" value="Iron-sulfur cluster assembly protein"/>
    <property type="match status" value="1"/>
</dbReference>
<dbReference type="Gene3D" id="3.90.1010.10">
    <property type="match status" value="1"/>
</dbReference>
<dbReference type="InterPro" id="IPR011339">
    <property type="entry name" value="ISCU"/>
</dbReference>
<dbReference type="InterPro" id="IPR002871">
    <property type="entry name" value="NIF_FeS_clus_asmbl_NifU_N"/>
</dbReference>
<dbReference type="NCBIfam" id="TIGR01999">
    <property type="entry name" value="iscU"/>
    <property type="match status" value="1"/>
</dbReference>
<dbReference type="PANTHER" id="PTHR10093">
    <property type="entry name" value="IRON-SULFUR CLUSTER ASSEMBLY ENZYME NIFU HOMOLOG"/>
    <property type="match status" value="1"/>
</dbReference>
<dbReference type="Pfam" id="PF01592">
    <property type="entry name" value="NifU_N"/>
    <property type="match status" value="1"/>
</dbReference>
<dbReference type="SUPFAM" id="SSF82649">
    <property type="entry name" value="SufE/NifU"/>
    <property type="match status" value="1"/>
</dbReference>
<organism>
    <name type="scientific">Schizosaccharomyces pombe (strain 972 / ATCC 24843)</name>
    <name type="common">Fission yeast</name>
    <dbReference type="NCBI Taxonomy" id="284812"/>
    <lineage>
        <taxon>Eukaryota</taxon>
        <taxon>Fungi</taxon>
        <taxon>Dikarya</taxon>
        <taxon>Ascomycota</taxon>
        <taxon>Taphrinomycotina</taxon>
        <taxon>Schizosaccharomycetes</taxon>
        <taxon>Schizosaccharomycetales</taxon>
        <taxon>Schizosaccharomycetaceae</taxon>
        <taxon>Schizosaccharomyces</taxon>
    </lineage>
</organism>
<reference key="1">
    <citation type="journal article" date="2002" name="Nature">
        <title>The genome sequence of Schizosaccharomyces pombe.</title>
        <authorList>
            <person name="Wood V."/>
            <person name="Gwilliam R."/>
            <person name="Rajandream M.A."/>
            <person name="Lyne M.H."/>
            <person name="Lyne R."/>
            <person name="Stewart A."/>
            <person name="Sgouros J.G."/>
            <person name="Peat N."/>
            <person name="Hayles J."/>
            <person name="Baker S.G."/>
            <person name="Basham D."/>
            <person name="Bowman S."/>
            <person name="Brooks K."/>
            <person name="Brown D."/>
            <person name="Brown S."/>
            <person name="Chillingworth T."/>
            <person name="Churcher C.M."/>
            <person name="Collins M."/>
            <person name="Connor R."/>
            <person name="Cronin A."/>
            <person name="Davis P."/>
            <person name="Feltwell T."/>
            <person name="Fraser A."/>
            <person name="Gentles S."/>
            <person name="Goble A."/>
            <person name="Hamlin N."/>
            <person name="Harris D.E."/>
            <person name="Hidalgo J."/>
            <person name="Hodgson G."/>
            <person name="Holroyd S."/>
            <person name="Hornsby T."/>
            <person name="Howarth S."/>
            <person name="Huckle E.J."/>
            <person name="Hunt S."/>
            <person name="Jagels K."/>
            <person name="James K.D."/>
            <person name="Jones L."/>
            <person name="Jones M."/>
            <person name="Leather S."/>
            <person name="McDonald S."/>
            <person name="McLean J."/>
            <person name="Mooney P."/>
            <person name="Moule S."/>
            <person name="Mungall K.L."/>
            <person name="Murphy L.D."/>
            <person name="Niblett D."/>
            <person name="Odell C."/>
            <person name="Oliver K."/>
            <person name="O'Neil S."/>
            <person name="Pearson D."/>
            <person name="Quail M.A."/>
            <person name="Rabbinowitsch E."/>
            <person name="Rutherford K.M."/>
            <person name="Rutter S."/>
            <person name="Saunders D."/>
            <person name="Seeger K."/>
            <person name="Sharp S."/>
            <person name="Skelton J."/>
            <person name="Simmonds M.N."/>
            <person name="Squares R."/>
            <person name="Squares S."/>
            <person name="Stevens K."/>
            <person name="Taylor K."/>
            <person name="Taylor R.G."/>
            <person name="Tivey A."/>
            <person name="Walsh S.V."/>
            <person name="Warren T."/>
            <person name="Whitehead S."/>
            <person name="Woodward J.R."/>
            <person name="Volckaert G."/>
            <person name="Aert R."/>
            <person name="Robben J."/>
            <person name="Grymonprez B."/>
            <person name="Weltjens I."/>
            <person name="Vanstreels E."/>
            <person name="Rieger M."/>
            <person name="Schaefer M."/>
            <person name="Mueller-Auer S."/>
            <person name="Gabel C."/>
            <person name="Fuchs M."/>
            <person name="Duesterhoeft A."/>
            <person name="Fritzc C."/>
            <person name="Holzer E."/>
            <person name="Moestl D."/>
            <person name="Hilbert H."/>
            <person name="Borzym K."/>
            <person name="Langer I."/>
            <person name="Beck A."/>
            <person name="Lehrach H."/>
            <person name="Reinhardt R."/>
            <person name="Pohl T.M."/>
            <person name="Eger P."/>
            <person name="Zimmermann W."/>
            <person name="Wedler H."/>
            <person name="Wambutt R."/>
            <person name="Purnelle B."/>
            <person name="Goffeau A."/>
            <person name="Cadieu E."/>
            <person name="Dreano S."/>
            <person name="Gloux S."/>
            <person name="Lelaure V."/>
            <person name="Mottier S."/>
            <person name="Galibert F."/>
            <person name="Aves S.J."/>
            <person name="Xiang Z."/>
            <person name="Hunt C."/>
            <person name="Moore K."/>
            <person name="Hurst S.M."/>
            <person name="Lucas M."/>
            <person name="Rochet M."/>
            <person name="Gaillardin C."/>
            <person name="Tallada V.A."/>
            <person name="Garzon A."/>
            <person name="Thode G."/>
            <person name="Daga R.R."/>
            <person name="Cruzado L."/>
            <person name="Jimenez J."/>
            <person name="Sanchez M."/>
            <person name="del Rey F."/>
            <person name="Benito J."/>
            <person name="Dominguez A."/>
            <person name="Revuelta J.L."/>
            <person name="Moreno S."/>
            <person name="Armstrong J."/>
            <person name="Forsburg S.L."/>
            <person name="Cerutti L."/>
            <person name="Lowe T."/>
            <person name="McCombie W.R."/>
            <person name="Paulsen I."/>
            <person name="Potashkin J."/>
            <person name="Shpakovski G.V."/>
            <person name="Ussery D."/>
            <person name="Barrell B.G."/>
            <person name="Nurse P."/>
        </authorList>
    </citation>
    <scope>NUCLEOTIDE SEQUENCE [LARGE SCALE GENOMIC DNA]</scope>
    <source>
        <strain>972 / ATCC 24843</strain>
    </source>
</reference>
<reference key="2">
    <citation type="journal article" date="2002" name="Biochemistry">
        <title>Characterization of an iron-sulfur cluster assembly protein (ISU1) from Schizosaccharomyces pombe.</title>
        <authorList>
            <person name="Wu G."/>
            <person name="Mansy S.S."/>
            <person name="Wu S.-P."/>
            <person name="Surerus K.K."/>
            <person name="Foster M.W."/>
            <person name="Cowan J.A."/>
        </authorList>
    </citation>
    <scope>COFACTOR</scope>
    <scope>SUBUNIT</scope>
</reference>
<reference key="3">
    <citation type="journal article" date="2006" name="Nat. Biotechnol.">
        <title>ORFeome cloning and global analysis of protein localization in the fission yeast Schizosaccharomyces pombe.</title>
        <authorList>
            <person name="Matsuyama A."/>
            <person name="Arai R."/>
            <person name="Yashiroda Y."/>
            <person name="Shirai A."/>
            <person name="Kamata A."/>
            <person name="Sekido S."/>
            <person name="Kobayashi Y."/>
            <person name="Hashimoto A."/>
            <person name="Hamamoto M."/>
            <person name="Hiraoka Y."/>
            <person name="Horinouchi S."/>
            <person name="Yoshida M."/>
        </authorList>
    </citation>
    <scope>SUBCELLULAR LOCATION [LARGE SCALE ANALYSIS]</scope>
</reference>
<name>ISU1_SCHPO</name>
<accession>Q9UTC6</accession>
<evidence type="ECO:0000250" key="1">
    <source>
        <dbReference type="UniProtKB" id="Q03020"/>
    </source>
</evidence>
<evidence type="ECO:0000255" key="2"/>
<evidence type="ECO:0000269" key="3">
    <source>
    </source>
</evidence>
<evidence type="ECO:0000269" key="4">
    <source>
    </source>
</evidence>
<evidence type="ECO:0000305" key="5"/>
<gene>
    <name type="primary">isu1</name>
    <name type="ORF">SPAC227.13c</name>
</gene>
<protein>
    <recommendedName>
        <fullName>Iron sulfur cluster assembly protein 1, mitochondrial</fullName>
    </recommendedName>
    <alternativeName>
        <fullName>Iron sulfur cluster scaffold protein 1</fullName>
    </alternativeName>
</protein>
<comment type="function">
    <text evidence="1">Scaffold protein for the de novo synthesis of iron-sulfur (Fe-S) clusters within mitochondria, which is required for maturation of both mitochondrial and cytoplasmic [2Fe-2S] and [4Fe-4S] proteins. First, a [2Fe-2S] cluster is transiently assembled on the scaffold protein isu1. In a second step, the cluster is released from isu1, transferred to a glutaredoxin, followed by the formation of mitochondrial [2Fe-2S] proteins, the synthesis of [4Fe-4S] clusters and their target-specific insertion into the recipient apoproteins. Cluster assembly on isu1 depends on the function of the cysteine desulfurase complex nfs1-isd11, which serves as the sulfur donor for cluster synthesis, the iron-binding protein frataxin as the putative iron donor, and the electron transfer chain comprised of ferredoxin reductase and ferredoxin, which receive their electrons from NADH.</text>
</comment>
<comment type="cofactor">
    <cofactor evidence="3">
        <name>[2Fe-2S] cluster</name>
        <dbReference type="ChEBI" id="CHEBI:190135"/>
    </cofactor>
    <text evidence="3">Binds 1 [2Fe-2S] cluster per subunit.</text>
</comment>
<comment type="pathway">
    <text evidence="1">Cofactor biosynthesis; iron-sulfur cluster biosynthesis.</text>
</comment>
<comment type="subunit">
    <text evidence="1 3">Homodimer (PubMed:11939799). Component of the core Fe-S cluster (ISC) assembly machinery (By similarity).</text>
</comment>
<comment type="subcellular location">
    <subcellularLocation>
        <location evidence="4">Mitochondrion</location>
    </subcellularLocation>
    <subcellularLocation>
        <location evidence="1">Mitochondrion matrix</location>
    </subcellularLocation>
</comment>
<comment type="similarity">
    <text evidence="5">Belongs to the NifU family.</text>
</comment>
<sequence>MSVFRRSVQCVGVLPSILAQRSSLLARPANLQFLKTNSSKFVPQVTANVSRRMYHKNVLDHYNNPRNVGTLPKGDPDVGIGLVGAPACGDVMRLAIRVNKDGVIEDVKFKTFGCGSAIASSSYVTTMVKGMTLEEASKIKNTQIAKELCLPPVKLHCSMLAEDAIKSAVKHYRSKQLTPVGTTAGAIESATA</sequence>
<keyword id="KW-0001">2Fe-2S</keyword>
<keyword id="KW-0408">Iron</keyword>
<keyword id="KW-0411">Iron-sulfur</keyword>
<keyword id="KW-0479">Metal-binding</keyword>
<keyword id="KW-0496">Mitochondrion</keyword>
<keyword id="KW-1185">Reference proteome</keyword>
<keyword id="KW-0809">Transit peptide</keyword>
<feature type="transit peptide" description="Mitochondrion" evidence="2">
    <location>
        <begin position="1"/>
        <end position="53"/>
    </location>
</feature>
<feature type="chain" id="PRO_0000019698" description="Iron sulfur cluster assembly protein 1, mitochondrial">
    <location>
        <begin position="54"/>
        <end position="192"/>
    </location>
</feature>